<evidence type="ECO:0000250" key="1"/>
<evidence type="ECO:0000305" key="2"/>
<keyword id="KW-0274">FAD</keyword>
<keyword id="KW-0285">Flavoprotein</keyword>
<keyword id="KW-0560">Oxidoreductase</keyword>
<keyword id="KW-1185">Reference proteome</keyword>
<sequence length="478" mass="54055">MNSLMNDDMVKIIRNGLSASQHPKHILVIGAGLSGLVSASLLKNAGHRVTILEASGRAGGRVCTLRSPFSDDLYFNAGPMRIPNNHSLTLEYIKKFKLPTNVFINRTPMDIIYANGIKTRLQVFERAPGILRYPVAPNEQGKTSEELMLSLLQPILNFINQNPARNWRIVEEQYKNHSLSSFLNTYFSYGAIDMIGVLLDMEAYMGMSLVEVLRESIFFSSPAHFYEITGGMDLLPHAFLPQLKTNILYHQKMMKMSQGENRVTIHCQHQQTAEFTSFTADLAIVTIPFSTLRFVKVEPYHSFSYYKRRAIRELNYISATKIGIEFKSRFWEKAGQHGGKSITDLPIRFSYYPSRNIGANGHAVILASYTWADEALIWDSLSEGERIQYTLLNLSEIYGDIVWSEFVSGTSFSWSQYPYSAGGFTAFEPGQELELYPYIPVPEGRVHFAGEHASLTHAWMQGAIESGIRVAYEVNRLP</sequence>
<dbReference type="EC" id="1.4.3.2"/>
<dbReference type="EMBL" id="AF027868">
    <property type="protein sequence ID" value="AAB84430.1"/>
    <property type="status" value="ALT_INIT"/>
    <property type="molecule type" value="Genomic_DNA"/>
</dbReference>
<dbReference type="EMBL" id="AL009126">
    <property type="protein sequence ID" value="CAB13794.2"/>
    <property type="molecule type" value="Genomic_DNA"/>
</dbReference>
<dbReference type="PIR" id="E69899">
    <property type="entry name" value="E69899"/>
</dbReference>
<dbReference type="RefSeq" id="NP_389783.2">
    <property type="nucleotide sequence ID" value="NC_000964.3"/>
</dbReference>
<dbReference type="SMR" id="O34363"/>
<dbReference type="FunCoup" id="O34363">
    <property type="interactions" value="161"/>
</dbReference>
<dbReference type="STRING" id="224308.BSU19020"/>
<dbReference type="PaxDb" id="224308-BSU19020"/>
<dbReference type="EnsemblBacteria" id="CAB13794">
    <property type="protein sequence ID" value="CAB13794"/>
    <property type="gene ID" value="BSU_19020"/>
</dbReference>
<dbReference type="GeneID" id="939632"/>
<dbReference type="KEGG" id="bsu:BSU19020"/>
<dbReference type="eggNOG" id="COG1231">
    <property type="taxonomic scope" value="Bacteria"/>
</dbReference>
<dbReference type="InParanoid" id="O34363"/>
<dbReference type="OrthoDB" id="25353at2"/>
<dbReference type="BioCyc" id="BSUB:BSU19020-MONOMER"/>
<dbReference type="Proteomes" id="UP000001570">
    <property type="component" value="Chromosome"/>
</dbReference>
<dbReference type="GO" id="GO:0001716">
    <property type="term" value="F:L-amino-acid oxidase activity"/>
    <property type="evidence" value="ECO:0000318"/>
    <property type="project" value="GO_Central"/>
</dbReference>
<dbReference type="GO" id="GO:0009063">
    <property type="term" value="P:amino acid catabolic process"/>
    <property type="evidence" value="ECO:0000318"/>
    <property type="project" value="GO_Central"/>
</dbReference>
<dbReference type="Gene3D" id="3.90.660.10">
    <property type="match status" value="1"/>
</dbReference>
<dbReference type="Gene3D" id="3.50.50.60">
    <property type="entry name" value="FAD/NAD(P)-binding domain"/>
    <property type="match status" value="1"/>
</dbReference>
<dbReference type="Gene3D" id="1.10.405.10">
    <property type="entry name" value="Guanine Nucleotide Dissociation Inhibitor, domain 1"/>
    <property type="match status" value="1"/>
</dbReference>
<dbReference type="InterPro" id="IPR002937">
    <property type="entry name" value="Amino_oxidase"/>
</dbReference>
<dbReference type="InterPro" id="IPR036188">
    <property type="entry name" value="FAD/NAD-bd_sf"/>
</dbReference>
<dbReference type="InterPro" id="IPR001613">
    <property type="entry name" value="Flavin_amine_oxidase"/>
</dbReference>
<dbReference type="InterPro" id="IPR050281">
    <property type="entry name" value="Flavin_monoamine_oxidase"/>
</dbReference>
<dbReference type="PANTHER" id="PTHR10742:SF342">
    <property type="entry name" value="AMINE OXIDASE"/>
    <property type="match status" value="1"/>
</dbReference>
<dbReference type="PANTHER" id="PTHR10742">
    <property type="entry name" value="FLAVIN MONOAMINE OXIDASE"/>
    <property type="match status" value="1"/>
</dbReference>
<dbReference type="Pfam" id="PF01593">
    <property type="entry name" value="Amino_oxidase"/>
    <property type="match status" value="1"/>
</dbReference>
<dbReference type="PRINTS" id="PR00757">
    <property type="entry name" value="AMINEOXDASEF"/>
</dbReference>
<dbReference type="SUPFAM" id="SSF54373">
    <property type="entry name" value="FAD-linked reductases, C-terminal domain"/>
    <property type="match status" value="1"/>
</dbReference>
<dbReference type="SUPFAM" id="SSF51905">
    <property type="entry name" value="FAD/NAD(P)-binding domain"/>
    <property type="match status" value="1"/>
</dbReference>
<organism>
    <name type="scientific">Bacillus subtilis (strain 168)</name>
    <dbReference type="NCBI Taxonomy" id="224308"/>
    <lineage>
        <taxon>Bacteria</taxon>
        <taxon>Bacillati</taxon>
        <taxon>Bacillota</taxon>
        <taxon>Bacilli</taxon>
        <taxon>Bacillales</taxon>
        <taxon>Bacillaceae</taxon>
        <taxon>Bacillus</taxon>
    </lineage>
</organism>
<protein>
    <recommendedName>
        <fullName>Putative L-amino-acid oxidase YobN</fullName>
        <ecNumber>1.4.3.2</ecNumber>
    </recommendedName>
</protein>
<reference key="1">
    <citation type="submission" date="1997-10" db="EMBL/GenBank/DDBJ databases">
        <title>Sequence analysis of the Bacillus subtilis chromosome region between the terC and odhAB loci cloned in a yeast artificial chromosome.</title>
        <authorList>
            <person name="Lapidus A."/>
            <person name="Galleron N."/>
            <person name="Sorokin A."/>
            <person name="Ehrlich S.D."/>
        </authorList>
    </citation>
    <scope>NUCLEOTIDE SEQUENCE [GENOMIC DNA]</scope>
</reference>
<reference key="2">
    <citation type="journal article" date="1997" name="Nature">
        <title>The complete genome sequence of the Gram-positive bacterium Bacillus subtilis.</title>
        <authorList>
            <person name="Kunst F."/>
            <person name="Ogasawara N."/>
            <person name="Moszer I."/>
            <person name="Albertini A.M."/>
            <person name="Alloni G."/>
            <person name="Azevedo V."/>
            <person name="Bertero M.G."/>
            <person name="Bessieres P."/>
            <person name="Bolotin A."/>
            <person name="Borchert S."/>
            <person name="Borriss R."/>
            <person name="Boursier L."/>
            <person name="Brans A."/>
            <person name="Braun M."/>
            <person name="Brignell S.C."/>
            <person name="Bron S."/>
            <person name="Brouillet S."/>
            <person name="Bruschi C.V."/>
            <person name="Caldwell B."/>
            <person name="Capuano V."/>
            <person name="Carter N.M."/>
            <person name="Choi S.-K."/>
            <person name="Codani J.-J."/>
            <person name="Connerton I.F."/>
            <person name="Cummings N.J."/>
            <person name="Daniel R.A."/>
            <person name="Denizot F."/>
            <person name="Devine K.M."/>
            <person name="Duesterhoeft A."/>
            <person name="Ehrlich S.D."/>
            <person name="Emmerson P.T."/>
            <person name="Entian K.-D."/>
            <person name="Errington J."/>
            <person name="Fabret C."/>
            <person name="Ferrari E."/>
            <person name="Foulger D."/>
            <person name="Fritz C."/>
            <person name="Fujita M."/>
            <person name="Fujita Y."/>
            <person name="Fuma S."/>
            <person name="Galizzi A."/>
            <person name="Galleron N."/>
            <person name="Ghim S.-Y."/>
            <person name="Glaser P."/>
            <person name="Goffeau A."/>
            <person name="Golightly E.J."/>
            <person name="Grandi G."/>
            <person name="Guiseppi G."/>
            <person name="Guy B.J."/>
            <person name="Haga K."/>
            <person name="Haiech J."/>
            <person name="Harwood C.R."/>
            <person name="Henaut A."/>
            <person name="Hilbert H."/>
            <person name="Holsappel S."/>
            <person name="Hosono S."/>
            <person name="Hullo M.-F."/>
            <person name="Itaya M."/>
            <person name="Jones L.-M."/>
            <person name="Joris B."/>
            <person name="Karamata D."/>
            <person name="Kasahara Y."/>
            <person name="Klaerr-Blanchard M."/>
            <person name="Klein C."/>
            <person name="Kobayashi Y."/>
            <person name="Koetter P."/>
            <person name="Koningstein G."/>
            <person name="Krogh S."/>
            <person name="Kumano M."/>
            <person name="Kurita K."/>
            <person name="Lapidus A."/>
            <person name="Lardinois S."/>
            <person name="Lauber J."/>
            <person name="Lazarevic V."/>
            <person name="Lee S.-M."/>
            <person name="Levine A."/>
            <person name="Liu H."/>
            <person name="Masuda S."/>
            <person name="Mauel C."/>
            <person name="Medigue C."/>
            <person name="Medina N."/>
            <person name="Mellado R.P."/>
            <person name="Mizuno M."/>
            <person name="Moestl D."/>
            <person name="Nakai S."/>
            <person name="Noback M."/>
            <person name="Noone D."/>
            <person name="O'Reilly M."/>
            <person name="Ogawa K."/>
            <person name="Ogiwara A."/>
            <person name="Oudega B."/>
            <person name="Park S.-H."/>
            <person name="Parro V."/>
            <person name="Pohl T.M."/>
            <person name="Portetelle D."/>
            <person name="Porwollik S."/>
            <person name="Prescott A.M."/>
            <person name="Presecan E."/>
            <person name="Pujic P."/>
            <person name="Purnelle B."/>
            <person name="Rapoport G."/>
            <person name="Rey M."/>
            <person name="Reynolds S."/>
            <person name="Rieger M."/>
            <person name="Rivolta C."/>
            <person name="Rocha E."/>
            <person name="Roche B."/>
            <person name="Rose M."/>
            <person name="Sadaie Y."/>
            <person name="Sato T."/>
            <person name="Scanlan E."/>
            <person name="Schleich S."/>
            <person name="Schroeter R."/>
            <person name="Scoffone F."/>
            <person name="Sekiguchi J."/>
            <person name="Sekowska A."/>
            <person name="Seror S.J."/>
            <person name="Serror P."/>
            <person name="Shin B.-S."/>
            <person name="Soldo B."/>
            <person name="Sorokin A."/>
            <person name="Tacconi E."/>
            <person name="Takagi T."/>
            <person name="Takahashi H."/>
            <person name="Takemaru K."/>
            <person name="Takeuchi M."/>
            <person name="Tamakoshi A."/>
            <person name="Tanaka T."/>
            <person name="Terpstra P."/>
            <person name="Tognoni A."/>
            <person name="Tosato V."/>
            <person name="Uchiyama S."/>
            <person name="Vandenbol M."/>
            <person name="Vannier F."/>
            <person name="Vassarotti A."/>
            <person name="Viari A."/>
            <person name="Wambutt R."/>
            <person name="Wedler E."/>
            <person name="Wedler H."/>
            <person name="Weitzenegger T."/>
            <person name="Winters P."/>
            <person name="Wipat A."/>
            <person name="Yamamoto H."/>
            <person name="Yamane K."/>
            <person name="Yasumoto K."/>
            <person name="Yata K."/>
            <person name="Yoshida K."/>
            <person name="Yoshikawa H.-F."/>
            <person name="Zumstein E."/>
            <person name="Yoshikawa H."/>
            <person name="Danchin A."/>
        </authorList>
    </citation>
    <scope>NUCLEOTIDE SEQUENCE [LARGE SCALE GENOMIC DNA]</scope>
    <source>
        <strain>168</strain>
    </source>
</reference>
<name>YOBN_BACSU</name>
<feature type="chain" id="PRO_0000359955" description="Putative L-amino-acid oxidase YobN">
    <location>
        <begin position="1"/>
        <end position="478"/>
    </location>
</feature>
<feature type="binding site" evidence="1">
    <location>
        <position position="34"/>
    </location>
    <ligand>
        <name>FAD</name>
        <dbReference type="ChEBI" id="CHEBI:57692"/>
    </ligand>
</feature>
<feature type="binding site" evidence="1">
    <location>
        <position position="53"/>
    </location>
    <ligand>
        <name>FAD</name>
        <dbReference type="ChEBI" id="CHEBI:57692"/>
    </ligand>
</feature>
<feature type="binding site" evidence="1">
    <location>
        <position position="61"/>
    </location>
    <ligand>
        <name>FAD</name>
        <dbReference type="ChEBI" id="CHEBI:57692"/>
    </ligand>
</feature>
<feature type="binding site" evidence="1">
    <location>
        <begin position="80"/>
        <end position="81"/>
    </location>
    <ligand>
        <name>FAD</name>
        <dbReference type="ChEBI" id="CHEBI:57692"/>
    </ligand>
</feature>
<feature type="binding site" evidence="1">
    <location>
        <position position="81"/>
    </location>
    <ligand>
        <name>substrate</name>
    </ligand>
</feature>
<feature type="binding site" evidence="1">
    <location>
        <position position="369"/>
    </location>
    <ligand>
        <name>substrate</name>
    </ligand>
</feature>
<feature type="binding site" evidence="1">
    <location>
        <position position="451"/>
    </location>
    <ligand>
        <name>FAD</name>
        <dbReference type="ChEBI" id="CHEBI:57692"/>
    </ligand>
</feature>
<feature type="binding site" evidence="1">
    <location>
        <begin position="460"/>
        <end position="463"/>
    </location>
    <ligand>
        <name>FAD</name>
        <dbReference type="ChEBI" id="CHEBI:57692"/>
    </ligand>
</feature>
<comment type="catalytic activity">
    <reaction>
        <text>an L-alpha-amino acid + O2 + H2O = a 2-oxocarboxylate + H2O2 + NH4(+)</text>
        <dbReference type="Rhea" id="RHEA:13781"/>
        <dbReference type="ChEBI" id="CHEBI:15377"/>
        <dbReference type="ChEBI" id="CHEBI:15379"/>
        <dbReference type="ChEBI" id="CHEBI:16240"/>
        <dbReference type="ChEBI" id="CHEBI:28938"/>
        <dbReference type="ChEBI" id="CHEBI:35179"/>
        <dbReference type="ChEBI" id="CHEBI:59869"/>
        <dbReference type="EC" id="1.4.3.2"/>
    </reaction>
</comment>
<comment type="cofactor">
    <cofactor evidence="1">
        <name>FAD</name>
        <dbReference type="ChEBI" id="CHEBI:57692"/>
    </cofactor>
</comment>
<comment type="similarity">
    <text evidence="2">Belongs to the flavin monoamine oxidase family. FIG1 subfamily.</text>
</comment>
<comment type="sequence caution" evidence="2">
    <conflict type="erroneous initiation">
        <sequence resource="EMBL-CDS" id="AAB84430"/>
    </conflict>
    <text>Truncated N-terminus.</text>
</comment>
<gene>
    <name type="primary">yobN</name>
    <name type="ordered locus">BSU19020</name>
</gene>
<proteinExistence type="inferred from homology"/>
<accession>O34363</accession>
<accession>Q796E0</accession>